<reference key="1">
    <citation type="submission" date="2005-08" db="EMBL/GenBank/DDBJ databases">
        <title>Complete sequence of Synechococcus sp. CC9902.</title>
        <authorList>
            <person name="Copeland A."/>
            <person name="Lucas S."/>
            <person name="Lapidus A."/>
            <person name="Barry K."/>
            <person name="Detter J.C."/>
            <person name="Glavina T."/>
            <person name="Hammon N."/>
            <person name="Israni S."/>
            <person name="Pitluck S."/>
            <person name="Martinez M."/>
            <person name="Schmutz J."/>
            <person name="Larimer F."/>
            <person name="Land M."/>
            <person name="Kyrpides N."/>
            <person name="Ivanova N."/>
            <person name="Richardson P."/>
        </authorList>
    </citation>
    <scope>NUCLEOTIDE SEQUENCE [LARGE SCALE GENOMIC DNA]</scope>
    <source>
        <strain>CC9902</strain>
    </source>
</reference>
<feature type="chain" id="PRO_0000243628" description="Glutamate-1-semialdehyde 2,1-aminomutase">
    <location>
        <begin position="1"/>
        <end position="428"/>
    </location>
</feature>
<feature type="modified residue" description="N6-(pyridoxal phosphate)lysine" evidence="1">
    <location>
        <position position="267"/>
    </location>
</feature>
<accession>Q3AWP4</accession>
<keyword id="KW-0149">Chlorophyll biosynthesis</keyword>
<keyword id="KW-0963">Cytoplasm</keyword>
<keyword id="KW-0413">Isomerase</keyword>
<keyword id="KW-0627">Porphyrin biosynthesis</keyword>
<keyword id="KW-0663">Pyridoxal phosphate</keyword>
<keyword id="KW-1185">Reference proteome</keyword>
<dbReference type="EC" id="5.4.3.8" evidence="1"/>
<dbReference type="EMBL" id="CP000097">
    <property type="protein sequence ID" value="ABB26659.1"/>
    <property type="status" value="ALT_INIT"/>
    <property type="molecule type" value="Genomic_DNA"/>
</dbReference>
<dbReference type="SMR" id="Q3AWP4"/>
<dbReference type="STRING" id="316279.Syncc9902_1701"/>
<dbReference type="KEGG" id="sye:Syncc9902_1701"/>
<dbReference type="eggNOG" id="COG0001">
    <property type="taxonomic scope" value="Bacteria"/>
</dbReference>
<dbReference type="HOGENOM" id="CLU_016922_1_5_3"/>
<dbReference type="UniPathway" id="UPA00251">
    <property type="reaction ID" value="UER00317"/>
</dbReference>
<dbReference type="UniPathway" id="UPA00668"/>
<dbReference type="Proteomes" id="UP000002712">
    <property type="component" value="Chromosome"/>
</dbReference>
<dbReference type="GO" id="GO:0005737">
    <property type="term" value="C:cytoplasm"/>
    <property type="evidence" value="ECO:0007669"/>
    <property type="project" value="UniProtKB-SubCell"/>
</dbReference>
<dbReference type="GO" id="GO:0042286">
    <property type="term" value="F:glutamate-1-semialdehyde 2,1-aminomutase activity"/>
    <property type="evidence" value="ECO:0007669"/>
    <property type="project" value="UniProtKB-UniRule"/>
</dbReference>
<dbReference type="GO" id="GO:0030170">
    <property type="term" value="F:pyridoxal phosphate binding"/>
    <property type="evidence" value="ECO:0007669"/>
    <property type="project" value="InterPro"/>
</dbReference>
<dbReference type="GO" id="GO:0008483">
    <property type="term" value="F:transaminase activity"/>
    <property type="evidence" value="ECO:0007669"/>
    <property type="project" value="InterPro"/>
</dbReference>
<dbReference type="GO" id="GO:0015995">
    <property type="term" value="P:chlorophyll biosynthetic process"/>
    <property type="evidence" value="ECO:0007669"/>
    <property type="project" value="UniProtKB-UniRule"/>
</dbReference>
<dbReference type="GO" id="GO:0006782">
    <property type="term" value="P:protoporphyrinogen IX biosynthetic process"/>
    <property type="evidence" value="ECO:0007669"/>
    <property type="project" value="UniProtKB-UniRule"/>
</dbReference>
<dbReference type="CDD" id="cd00610">
    <property type="entry name" value="OAT_like"/>
    <property type="match status" value="1"/>
</dbReference>
<dbReference type="FunFam" id="3.40.640.10:FF:000021">
    <property type="entry name" value="Glutamate-1-semialdehyde 2,1-aminomutase"/>
    <property type="match status" value="1"/>
</dbReference>
<dbReference type="Gene3D" id="3.90.1150.10">
    <property type="entry name" value="Aspartate Aminotransferase, domain 1"/>
    <property type="match status" value="1"/>
</dbReference>
<dbReference type="Gene3D" id="3.40.640.10">
    <property type="entry name" value="Type I PLP-dependent aspartate aminotransferase-like (Major domain)"/>
    <property type="match status" value="1"/>
</dbReference>
<dbReference type="HAMAP" id="MF_00375">
    <property type="entry name" value="HemL_aminotrans_3"/>
    <property type="match status" value="1"/>
</dbReference>
<dbReference type="InterPro" id="IPR004639">
    <property type="entry name" value="4pyrrol_synth_GluAld_NH2Trfase"/>
</dbReference>
<dbReference type="InterPro" id="IPR005814">
    <property type="entry name" value="Aminotrans_3"/>
</dbReference>
<dbReference type="InterPro" id="IPR049704">
    <property type="entry name" value="Aminotrans_3_PPA_site"/>
</dbReference>
<dbReference type="InterPro" id="IPR015424">
    <property type="entry name" value="PyrdxlP-dep_Trfase"/>
</dbReference>
<dbReference type="InterPro" id="IPR015421">
    <property type="entry name" value="PyrdxlP-dep_Trfase_major"/>
</dbReference>
<dbReference type="InterPro" id="IPR015422">
    <property type="entry name" value="PyrdxlP-dep_Trfase_small"/>
</dbReference>
<dbReference type="NCBIfam" id="TIGR00713">
    <property type="entry name" value="hemL"/>
    <property type="match status" value="1"/>
</dbReference>
<dbReference type="NCBIfam" id="NF000818">
    <property type="entry name" value="PRK00062.1"/>
    <property type="match status" value="1"/>
</dbReference>
<dbReference type="PANTHER" id="PTHR43713">
    <property type="entry name" value="GLUTAMATE-1-SEMIALDEHYDE 2,1-AMINOMUTASE"/>
    <property type="match status" value="1"/>
</dbReference>
<dbReference type="PANTHER" id="PTHR43713:SF3">
    <property type="entry name" value="GLUTAMATE-1-SEMIALDEHYDE 2,1-AMINOMUTASE 1, CHLOROPLASTIC-RELATED"/>
    <property type="match status" value="1"/>
</dbReference>
<dbReference type="Pfam" id="PF00202">
    <property type="entry name" value="Aminotran_3"/>
    <property type="match status" value="1"/>
</dbReference>
<dbReference type="SUPFAM" id="SSF53383">
    <property type="entry name" value="PLP-dependent transferases"/>
    <property type="match status" value="1"/>
</dbReference>
<dbReference type="PROSITE" id="PS00600">
    <property type="entry name" value="AA_TRANSFER_CLASS_3"/>
    <property type="match status" value="1"/>
</dbReference>
<name>GSA_SYNS9</name>
<protein>
    <recommendedName>
        <fullName evidence="1">Glutamate-1-semialdehyde 2,1-aminomutase</fullName>
        <shortName evidence="1">GSA</shortName>
        <ecNumber evidence="1">5.4.3.8</ecNumber>
    </recommendedName>
    <alternativeName>
        <fullName evidence="1">Glutamate-1-semialdehyde aminotransferase</fullName>
        <shortName evidence="1">GSA-AT</shortName>
    </alternativeName>
</protein>
<evidence type="ECO:0000255" key="1">
    <source>
        <dbReference type="HAMAP-Rule" id="MF_00375"/>
    </source>
</evidence>
<evidence type="ECO:0000305" key="2"/>
<proteinExistence type="inferred from homology"/>
<sequence>MNTSRSQAIFGAAQGLMPGGVSSPVRAFKSVGGQPIVFDRVKGPYAWDVDGNKYIDYIGSWGPAICGHAHPEVISALQEAIEKGTSFGAPCALENTLAEMVIDAVPSVEMVRFVNSGTEACMAVLRLMRAFTGRDKVIKFEGCYHGHADMFLVKAGSGVATLGLPDSPGVPRSTTANTLTAPYNDLEAVKALFAENPDAISGVILEPIVGNAGFIQPEPGFLEGLRELTKENGALLVFDEVMTGFRISYGGAQAHFGVTPDLTTMGKVIGGGLPVGAYGGRADIMQMVSPAGPMYQAGTLSGNPLAMTAGIKTLELLKQPGTYEKLAATTERLISGIKTAAGEAGFPITGGSVSAMFGFFLCEGPVRNFEEAKATDSERFGRLHRAMLERGVYLAPSAYEAGFTSLAHSDADIEATINAFRESFAVIG</sequence>
<organism>
    <name type="scientific">Synechococcus sp. (strain CC9902)</name>
    <dbReference type="NCBI Taxonomy" id="316279"/>
    <lineage>
        <taxon>Bacteria</taxon>
        <taxon>Bacillati</taxon>
        <taxon>Cyanobacteriota</taxon>
        <taxon>Cyanophyceae</taxon>
        <taxon>Synechococcales</taxon>
        <taxon>Synechococcaceae</taxon>
        <taxon>Synechococcus</taxon>
    </lineage>
</organism>
<gene>
    <name evidence="1" type="primary">hemL</name>
    <name type="ordered locus">Syncc9902_1701</name>
</gene>
<comment type="catalytic activity">
    <reaction evidence="1">
        <text>(S)-4-amino-5-oxopentanoate = 5-aminolevulinate</text>
        <dbReference type="Rhea" id="RHEA:14265"/>
        <dbReference type="ChEBI" id="CHEBI:57501"/>
        <dbReference type="ChEBI" id="CHEBI:356416"/>
        <dbReference type="EC" id="5.4.3.8"/>
    </reaction>
</comment>
<comment type="cofactor">
    <cofactor evidence="1">
        <name>pyridoxal 5'-phosphate</name>
        <dbReference type="ChEBI" id="CHEBI:597326"/>
    </cofactor>
</comment>
<comment type="pathway">
    <text evidence="1">Porphyrin-containing compound metabolism; protoporphyrin-IX biosynthesis; 5-aminolevulinate from L-glutamyl-tRNA(Glu): step 2/2.</text>
</comment>
<comment type="pathway">
    <text evidence="1">Porphyrin-containing compound metabolism; chlorophyll biosynthesis.</text>
</comment>
<comment type="subunit">
    <text evidence="1">Homodimer.</text>
</comment>
<comment type="subcellular location">
    <subcellularLocation>
        <location evidence="1">Cytoplasm</location>
    </subcellularLocation>
</comment>
<comment type="similarity">
    <text evidence="1">Belongs to the class-III pyridoxal-phosphate-dependent aminotransferase family. HemL subfamily.</text>
</comment>
<comment type="sequence caution" evidence="2">
    <conflict type="erroneous initiation">
        <sequence resource="EMBL-CDS" id="ABB26659"/>
    </conflict>
</comment>